<accession>Q8BH73</accession>
<accession>Q9D8T5</accession>
<accession>Q9D8Y3</accession>
<feature type="chain" id="PRO_0000302004" description="Glutaminyl-peptide cyclotransferase-like protein">
    <location>
        <begin position="1"/>
        <end position="383"/>
    </location>
</feature>
<feature type="transmembrane region" description="Helical" evidence="4">
    <location>
        <begin position="33"/>
        <end position="53"/>
    </location>
</feature>
<feature type="active site" description="Proton acceptor" evidence="3">
    <location>
        <position position="226"/>
    </location>
</feature>
<feature type="active site" description="Proton acceptor" evidence="3">
    <location>
        <position position="270"/>
    </location>
</feature>
<feature type="binding site" evidence="3">
    <location>
        <position position="187"/>
    </location>
    <ligand>
        <name>Zn(2+)</name>
        <dbReference type="ChEBI" id="CHEBI:29105"/>
    </ligand>
</feature>
<feature type="binding site" evidence="3">
    <location>
        <position position="227"/>
    </location>
    <ligand>
        <name>Zn(2+)</name>
        <dbReference type="ChEBI" id="CHEBI:29105"/>
    </ligand>
</feature>
<feature type="binding site" evidence="3">
    <location>
        <position position="352"/>
    </location>
    <ligand>
        <name>Zn(2+)</name>
        <dbReference type="ChEBI" id="CHEBI:29105"/>
    </ligand>
</feature>
<feature type="disulfide bond" evidence="3">
    <location>
        <begin position="168"/>
        <end position="192"/>
    </location>
</feature>
<feature type="splice variant" id="VSP_027904" description="In isoform 2." evidence="6">
    <location>
        <position position="224"/>
    </location>
</feature>
<feature type="sequence conflict" description="In Ref. 1; BAB25199." evidence="7" ref="1">
    <original>L</original>
    <variation>P</variation>
    <location>
        <position position="194"/>
    </location>
</feature>
<feature type="sequence conflict" description="In Ref. 1; BAB25105." evidence="7" ref="1">
    <original>W</original>
    <variation>L</variation>
    <location>
        <position position="351"/>
    </location>
</feature>
<sequence>MSPGSRGRPRQRLEDRGLMKPPSLSKRRLLPRVQFLPLLLLALAMGLAFYIVWNSWHPGVEEMSRSRDLRVPLIGSLSEAKLRLVVGQLDPQRLWGTFLRPLLIVRPPGSSGNLQVRKFLEATLQSLSAGWHVELDPFTASTPLGPLDFGNVVATLDPGAARHLTLACHYDSKFFPPGLPPFVGATDSAVPCALLLELVQALDAMLSRIKQQAAPVTLQLLFLDGEEALKEWGPKDSLYGSRHLAQIMESIPHSPGPTRIQAIELFVLLDLLGASSPIFFSHFPRTARWFQRLRSIEKRLHRLNLLQSHPQEVMYFQPGEPPGPVEDDHIPFLRRGVPVLHLIATPFPAVWHTPADTEANLHPPTVHNLSRILAVFLAEYLGL</sequence>
<dbReference type="EC" id="2.3.2.5"/>
<dbReference type="EMBL" id="AK007555">
    <property type="protein sequence ID" value="BAB25105.1"/>
    <property type="molecule type" value="mRNA"/>
</dbReference>
<dbReference type="EMBL" id="AK007701">
    <property type="protein sequence ID" value="BAB25199.1"/>
    <property type="molecule type" value="mRNA"/>
</dbReference>
<dbReference type="EMBL" id="AK035587">
    <property type="protein sequence ID" value="BAC29114.1"/>
    <property type="molecule type" value="mRNA"/>
</dbReference>
<dbReference type="EMBL" id="AK045687">
    <property type="protein sequence ID" value="BAC32458.1"/>
    <property type="molecule type" value="mRNA"/>
</dbReference>
<dbReference type="EMBL" id="BC058181">
    <property type="protein sequence ID" value="AAH58181.1"/>
    <property type="molecule type" value="mRNA"/>
</dbReference>
<dbReference type="CCDS" id="CCDS20891.1">
    <molecule id="Q8BH73-1"/>
</dbReference>
<dbReference type="RefSeq" id="NP_080387.2">
    <molecule id="Q8BH73-1"/>
    <property type="nucleotide sequence ID" value="NM_026111.3"/>
</dbReference>
<dbReference type="SMR" id="Q8BH73"/>
<dbReference type="BioGRID" id="212139">
    <property type="interactions" value="2"/>
</dbReference>
<dbReference type="FunCoup" id="Q8BH73">
    <property type="interactions" value="1350"/>
</dbReference>
<dbReference type="STRING" id="10090.ENSMUSP00000032566"/>
<dbReference type="MEROPS" id="M28.016"/>
<dbReference type="iPTMnet" id="Q8BH73"/>
<dbReference type="PhosphoSitePlus" id="Q8BH73"/>
<dbReference type="PaxDb" id="10090-ENSMUSP00000032566"/>
<dbReference type="PeptideAtlas" id="Q8BH73"/>
<dbReference type="ProteomicsDB" id="255020">
    <molecule id="Q8BH73-1"/>
</dbReference>
<dbReference type="ProteomicsDB" id="255021">
    <molecule id="Q8BH73-2"/>
</dbReference>
<dbReference type="Pumba" id="Q8BH73"/>
<dbReference type="Antibodypedia" id="31379">
    <property type="antibodies" value="109 antibodies from 18 providers"/>
</dbReference>
<dbReference type="DNASU" id="67369"/>
<dbReference type="Ensembl" id="ENSMUST00000032566.3">
    <molecule id="Q8BH73-1"/>
    <property type="protein sequence ID" value="ENSMUSP00000032566.2"/>
    <property type="gene ID" value="ENSMUSG00000030407.3"/>
</dbReference>
<dbReference type="GeneID" id="67369"/>
<dbReference type="KEGG" id="mmu:67369"/>
<dbReference type="UCSC" id="uc009fku.1">
    <molecule id="Q8BH73-1"/>
    <property type="organism name" value="mouse"/>
</dbReference>
<dbReference type="AGR" id="MGI:1914619"/>
<dbReference type="CTD" id="54814"/>
<dbReference type="MGI" id="MGI:1914619">
    <property type="gene designation" value="Qpctl"/>
</dbReference>
<dbReference type="VEuPathDB" id="HostDB:ENSMUSG00000030407"/>
<dbReference type="eggNOG" id="KOG3946">
    <property type="taxonomic scope" value="Eukaryota"/>
</dbReference>
<dbReference type="GeneTree" id="ENSGT00390000003107"/>
<dbReference type="HOGENOM" id="CLU_045003_3_0_1"/>
<dbReference type="InParanoid" id="Q8BH73"/>
<dbReference type="OMA" id="TPFPSFW"/>
<dbReference type="OrthoDB" id="3907302at2759"/>
<dbReference type="PhylomeDB" id="Q8BH73"/>
<dbReference type="TreeFam" id="TF315071"/>
<dbReference type="BioGRID-ORCS" id="67369">
    <property type="hits" value="5 hits in 78 CRISPR screens"/>
</dbReference>
<dbReference type="ChiTaRS" id="Qpctl">
    <property type="organism name" value="mouse"/>
</dbReference>
<dbReference type="PRO" id="PR:Q8BH73"/>
<dbReference type="Proteomes" id="UP000000589">
    <property type="component" value="Chromosome 7"/>
</dbReference>
<dbReference type="RNAct" id="Q8BH73">
    <property type="molecule type" value="protein"/>
</dbReference>
<dbReference type="Bgee" id="ENSMUSG00000030407">
    <property type="expression patterns" value="Expressed in granulocyte and 216 other cell types or tissues"/>
</dbReference>
<dbReference type="GO" id="GO:0005794">
    <property type="term" value="C:Golgi apparatus"/>
    <property type="evidence" value="ECO:0000266"/>
    <property type="project" value="MGI"/>
</dbReference>
<dbReference type="GO" id="GO:0000139">
    <property type="term" value="C:Golgi membrane"/>
    <property type="evidence" value="ECO:0007669"/>
    <property type="project" value="UniProtKB-SubCell"/>
</dbReference>
<dbReference type="GO" id="GO:0016603">
    <property type="term" value="F:glutaminyl-peptide cyclotransferase activity"/>
    <property type="evidence" value="ECO:0000250"/>
    <property type="project" value="UniProtKB"/>
</dbReference>
<dbReference type="GO" id="GO:0008270">
    <property type="term" value="F:zinc ion binding"/>
    <property type="evidence" value="ECO:0000250"/>
    <property type="project" value="UniProtKB"/>
</dbReference>
<dbReference type="GO" id="GO:0017186">
    <property type="term" value="P:peptidyl-pyroglutamic acid biosynthetic process, using glutaminyl-peptide cyclotransferase"/>
    <property type="evidence" value="ECO:0000250"/>
    <property type="project" value="UniProtKB"/>
</dbReference>
<dbReference type="CDD" id="cd03880">
    <property type="entry name" value="M28_QC_like"/>
    <property type="match status" value="1"/>
</dbReference>
<dbReference type="FunFam" id="3.40.630.10:FF:000053">
    <property type="entry name" value="glutaminyl-peptide cyclotransferase-like protein"/>
    <property type="match status" value="1"/>
</dbReference>
<dbReference type="Gene3D" id="3.40.630.10">
    <property type="entry name" value="Zn peptidases"/>
    <property type="match status" value="1"/>
</dbReference>
<dbReference type="InterPro" id="IPR037457">
    <property type="entry name" value="M28_QC"/>
</dbReference>
<dbReference type="InterPro" id="IPR007484">
    <property type="entry name" value="Peptidase_M28"/>
</dbReference>
<dbReference type="InterPro" id="IPR040234">
    <property type="entry name" value="QC/QCL"/>
</dbReference>
<dbReference type="PANTHER" id="PTHR12283">
    <property type="entry name" value="GLUTAMINYL-PEPTIDE CYCLOTRANSFERASE"/>
    <property type="match status" value="1"/>
</dbReference>
<dbReference type="PANTHER" id="PTHR12283:SF3">
    <property type="entry name" value="GLUTAMINYL-PEPTIDE CYCLOTRANSFERASE-LIKE PROTEIN"/>
    <property type="match status" value="1"/>
</dbReference>
<dbReference type="Pfam" id="PF04389">
    <property type="entry name" value="Peptidase_M28"/>
    <property type="match status" value="1"/>
</dbReference>
<dbReference type="SUPFAM" id="SSF53187">
    <property type="entry name" value="Zn-dependent exopeptidases"/>
    <property type="match status" value="1"/>
</dbReference>
<gene>
    <name type="primary">Qpctl</name>
</gene>
<proteinExistence type="evidence at protein level"/>
<organism>
    <name type="scientific">Mus musculus</name>
    <name type="common">Mouse</name>
    <dbReference type="NCBI Taxonomy" id="10090"/>
    <lineage>
        <taxon>Eukaryota</taxon>
        <taxon>Metazoa</taxon>
        <taxon>Chordata</taxon>
        <taxon>Craniata</taxon>
        <taxon>Vertebrata</taxon>
        <taxon>Euteleostomi</taxon>
        <taxon>Mammalia</taxon>
        <taxon>Eutheria</taxon>
        <taxon>Euarchontoglires</taxon>
        <taxon>Glires</taxon>
        <taxon>Rodentia</taxon>
        <taxon>Myomorpha</taxon>
        <taxon>Muroidea</taxon>
        <taxon>Muridae</taxon>
        <taxon>Murinae</taxon>
        <taxon>Mus</taxon>
        <taxon>Mus</taxon>
    </lineage>
</organism>
<name>QPCTL_MOUSE</name>
<keyword id="KW-0012">Acyltransferase</keyword>
<keyword id="KW-0025">Alternative splicing</keyword>
<keyword id="KW-1015">Disulfide bond</keyword>
<keyword id="KW-0333">Golgi apparatus</keyword>
<keyword id="KW-0472">Membrane</keyword>
<keyword id="KW-0479">Metal-binding</keyword>
<keyword id="KW-1185">Reference proteome</keyword>
<keyword id="KW-0808">Transferase</keyword>
<keyword id="KW-0812">Transmembrane</keyword>
<keyword id="KW-1133">Transmembrane helix</keyword>
<keyword id="KW-0862">Zinc</keyword>
<protein>
    <recommendedName>
        <fullName>Glutaminyl-peptide cyclotransferase-like protein</fullName>
        <ecNumber>2.3.2.5</ecNumber>
    </recommendedName>
    <alternativeName>
        <fullName>Golgi-resident glutaminyl-peptide cyclotransferase</fullName>
    </alternativeName>
    <alternativeName>
        <fullName>isoQC</fullName>
        <shortName>gQC</shortName>
    </alternativeName>
</protein>
<comment type="function">
    <text evidence="1">Responsible for the biosynthesis of pyroglutamyl peptides.</text>
</comment>
<comment type="catalytic activity">
    <reaction>
        <text>N-terminal L-glutaminyl-[peptide] = N-terminal 5-oxo-L-prolyl-[peptide] + NH4(+)</text>
        <dbReference type="Rhea" id="RHEA:23652"/>
        <dbReference type="Rhea" id="RHEA-COMP:11736"/>
        <dbReference type="Rhea" id="RHEA-COMP:11846"/>
        <dbReference type="ChEBI" id="CHEBI:28938"/>
        <dbReference type="ChEBI" id="CHEBI:64722"/>
        <dbReference type="ChEBI" id="CHEBI:87215"/>
        <dbReference type="EC" id="2.3.2.5"/>
    </reaction>
</comment>
<comment type="subcellular location">
    <subcellularLocation>
        <location evidence="1">Golgi apparatus membrane</location>
        <topology evidence="1">Single-pass type I membrane protein</topology>
    </subcellularLocation>
</comment>
<comment type="alternative products">
    <event type="alternative splicing"/>
    <isoform>
        <id>Q8BH73-1</id>
        <name>1</name>
        <sequence type="displayed"/>
    </isoform>
    <isoform>
        <id>Q8BH73-2</id>
        <name>2</name>
        <sequence type="described" ref="VSP_027904"/>
    </isoform>
</comment>
<comment type="tissue specificity">
    <text evidence="5">Detected in thalamus, hippocampus, brain cortex, cerebellum, kidney, lung and liver, and at low levels in heart and spleen.</text>
</comment>
<comment type="similarity">
    <text evidence="7">Belongs to the glutaminyl-peptide cyclotransferase family.</text>
</comment>
<comment type="caution">
    <text evidence="2 3">It is unclear whether this protein requires a metal cofactor for catalysis. It was originally proposed to be a Zn(2+)-dependent metalloenzyme based on structural similarities to bacterial aminopeptidases and the observation that it can bind Zn(2+) ions, typically in a 1:1 stoichiometry (By similarity). However, a recent study suggests a Zn(2+)-independent catalytic mechanism (By similarity).</text>
</comment>
<reference key="1">
    <citation type="journal article" date="2005" name="Science">
        <title>The transcriptional landscape of the mammalian genome.</title>
        <authorList>
            <person name="Carninci P."/>
            <person name="Kasukawa T."/>
            <person name="Katayama S."/>
            <person name="Gough J."/>
            <person name="Frith M.C."/>
            <person name="Maeda N."/>
            <person name="Oyama R."/>
            <person name="Ravasi T."/>
            <person name="Lenhard B."/>
            <person name="Wells C."/>
            <person name="Kodzius R."/>
            <person name="Shimokawa K."/>
            <person name="Bajic V.B."/>
            <person name="Brenner S.E."/>
            <person name="Batalov S."/>
            <person name="Forrest A.R."/>
            <person name="Zavolan M."/>
            <person name="Davis M.J."/>
            <person name="Wilming L.G."/>
            <person name="Aidinis V."/>
            <person name="Allen J.E."/>
            <person name="Ambesi-Impiombato A."/>
            <person name="Apweiler R."/>
            <person name="Aturaliya R.N."/>
            <person name="Bailey T.L."/>
            <person name="Bansal M."/>
            <person name="Baxter L."/>
            <person name="Beisel K.W."/>
            <person name="Bersano T."/>
            <person name="Bono H."/>
            <person name="Chalk A.M."/>
            <person name="Chiu K.P."/>
            <person name="Choudhary V."/>
            <person name="Christoffels A."/>
            <person name="Clutterbuck D.R."/>
            <person name="Crowe M.L."/>
            <person name="Dalla E."/>
            <person name="Dalrymple B.P."/>
            <person name="de Bono B."/>
            <person name="Della Gatta G."/>
            <person name="di Bernardo D."/>
            <person name="Down T."/>
            <person name="Engstrom P."/>
            <person name="Fagiolini M."/>
            <person name="Faulkner G."/>
            <person name="Fletcher C.F."/>
            <person name="Fukushima T."/>
            <person name="Furuno M."/>
            <person name="Futaki S."/>
            <person name="Gariboldi M."/>
            <person name="Georgii-Hemming P."/>
            <person name="Gingeras T.R."/>
            <person name="Gojobori T."/>
            <person name="Green R.E."/>
            <person name="Gustincich S."/>
            <person name="Harbers M."/>
            <person name="Hayashi Y."/>
            <person name="Hensch T.K."/>
            <person name="Hirokawa N."/>
            <person name="Hill D."/>
            <person name="Huminiecki L."/>
            <person name="Iacono M."/>
            <person name="Ikeo K."/>
            <person name="Iwama A."/>
            <person name="Ishikawa T."/>
            <person name="Jakt M."/>
            <person name="Kanapin A."/>
            <person name="Katoh M."/>
            <person name="Kawasawa Y."/>
            <person name="Kelso J."/>
            <person name="Kitamura H."/>
            <person name="Kitano H."/>
            <person name="Kollias G."/>
            <person name="Krishnan S.P."/>
            <person name="Kruger A."/>
            <person name="Kummerfeld S.K."/>
            <person name="Kurochkin I.V."/>
            <person name="Lareau L.F."/>
            <person name="Lazarevic D."/>
            <person name="Lipovich L."/>
            <person name="Liu J."/>
            <person name="Liuni S."/>
            <person name="McWilliam S."/>
            <person name="Madan Babu M."/>
            <person name="Madera M."/>
            <person name="Marchionni L."/>
            <person name="Matsuda H."/>
            <person name="Matsuzawa S."/>
            <person name="Miki H."/>
            <person name="Mignone F."/>
            <person name="Miyake S."/>
            <person name="Morris K."/>
            <person name="Mottagui-Tabar S."/>
            <person name="Mulder N."/>
            <person name="Nakano N."/>
            <person name="Nakauchi H."/>
            <person name="Ng P."/>
            <person name="Nilsson R."/>
            <person name="Nishiguchi S."/>
            <person name="Nishikawa S."/>
            <person name="Nori F."/>
            <person name="Ohara O."/>
            <person name="Okazaki Y."/>
            <person name="Orlando V."/>
            <person name="Pang K.C."/>
            <person name="Pavan W.J."/>
            <person name="Pavesi G."/>
            <person name="Pesole G."/>
            <person name="Petrovsky N."/>
            <person name="Piazza S."/>
            <person name="Reed J."/>
            <person name="Reid J.F."/>
            <person name="Ring B.Z."/>
            <person name="Ringwald M."/>
            <person name="Rost B."/>
            <person name="Ruan Y."/>
            <person name="Salzberg S.L."/>
            <person name="Sandelin A."/>
            <person name="Schneider C."/>
            <person name="Schoenbach C."/>
            <person name="Sekiguchi K."/>
            <person name="Semple C.A."/>
            <person name="Seno S."/>
            <person name="Sessa L."/>
            <person name="Sheng Y."/>
            <person name="Shibata Y."/>
            <person name="Shimada H."/>
            <person name="Shimada K."/>
            <person name="Silva D."/>
            <person name="Sinclair B."/>
            <person name="Sperling S."/>
            <person name="Stupka E."/>
            <person name="Sugiura K."/>
            <person name="Sultana R."/>
            <person name="Takenaka Y."/>
            <person name="Taki K."/>
            <person name="Tammoja K."/>
            <person name="Tan S.L."/>
            <person name="Tang S."/>
            <person name="Taylor M.S."/>
            <person name="Tegner J."/>
            <person name="Teichmann S.A."/>
            <person name="Ueda H.R."/>
            <person name="van Nimwegen E."/>
            <person name="Verardo R."/>
            <person name="Wei C.L."/>
            <person name="Yagi K."/>
            <person name="Yamanishi H."/>
            <person name="Zabarovsky E."/>
            <person name="Zhu S."/>
            <person name="Zimmer A."/>
            <person name="Hide W."/>
            <person name="Bult C."/>
            <person name="Grimmond S.M."/>
            <person name="Teasdale R.D."/>
            <person name="Liu E.T."/>
            <person name="Brusic V."/>
            <person name="Quackenbush J."/>
            <person name="Wahlestedt C."/>
            <person name="Mattick J.S."/>
            <person name="Hume D.A."/>
            <person name="Kai C."/>
            <person name="Sasaki D."/>
            <person name="Tomaru Y."/>
            <person name="Fukuda S."/>
            <person name="Kanamori-Katayama M."/>
            <person name="Suzuki M."/>
            <person name="Aoki J."/>
            <person name="Arakawa T."/>
            <person name="Iida J."/>
            <person name="Imamura K."/>
            <person name="Itoh M."/>
            <person name="Kato T."/>
            <person name="Kawaji H."/>
            <person name="Kawagashira N."/>
            <person name="Kawashima T."/>
            <person name="Kojima M."/>
            <person name="Kondo S."/>
            <person name="Konno H."/>
            <person name="Nakano K."/>
            <person name="Ninomiya N."/>
            <person name="Nishio T."/>
            <person name="Okada M."/>
            <person name="Plessy C."/>
            <person name="Shibata K."/>
            <person name="Shiraki T."/>
            <person name="Suzuki S."/>
            <person name="Tagami M."/>
            <person name="Waki K."/>
            <person name="Watahiki A."/>
            <person name="Okamura-Oho Y."/>
            <person name="Suzuki H."/>
            <person name="Kawai J."/>
            <person name="Hayashizaki Y."/>
        </authorList>
    </citation>
    <scope>NUCLEOTIDE SEQUENCE [LARGE SCALE MRNA] (ISOFORMS 1 AND 2)</scope>
    <source>
        <strain>C57BL/6J</strain>
        <tissue>Corpora quadrigemina</tissue>
        <tissue>Pancreas</tissue>
        <tissue>Urinary bladder</tissue>
    </source>
</reference>
<reference key="2">
    <citation type="journal article" date="2004" name="Genome Res.">
        <title>The status, quality, and expansion of the NIH full-length cDNA project: the Mammalian Gene Collection (MGC).</title>
        <authorList>
            <consortium name="The MGC Project Team"/>
        </authorList>
    </citation>
    <scope>NUCLEOTIDE SEQUENCE [LARGE SCALE MRNA] (ISOFORM 1)</scope>
    <source>
        <strain>NMRI</strain>
        <tissue>Mammary tumor</tissue>
    </source>
</reference>
<reference key="3">
    <citation type="journal article" date="2008" name="J. Mol. Biol.">
        <title>Isolation of an isoenzyme of human glutaminyl cyclase: retention in the Golgi complex suggests involvement in the protein maturation machinery.</title>
        <authorList>
            <person name="Cynis H."/>
            <person name="Rahfeld J.U."/>
            <person name="Stephan A."/>
            <person name="Kehlen A."/>
            <person name="Koch B."/>
            <person name="Wermann M."/>
            <person name="Demuth H.U."/>
            <person name="Schilling S."/>
        </authorList>
    </citation>
    <scope>TISSUE SPECIFICITY</scope>
</reference>
<reference key="4">
    <citation type="journal article" date="2010" name="Cell">
        <title>A tissue-specific atlas of mouse protein phosphorylation and expression.</title>
        <authorList>
            <person name="Huttlin E.L."/>
            <person name="Jedrychowski M.P."/>
            <person name="Elias J.E."/>
            <person name="Goswami T."/>
            <person name="Rad R."/>
            <person name="Beausoleil S.A."/>
            <person name="Villen J."/>
            <person name="Haas W."/>
            <person name="Sowa M.E."/>
            <person name="Gygi S.P."/>
        </authorList>
    </citation>
    <scope>IDENTIFICATION BY MASS SPECTROMETRY [LARGE SCALE ANALYSIS]</scope>
    <source>
        <tissue>Spleen</tissue>
    </source>
</reference>
<evidence type="ECO:0000250" key="1"/>
<evidence type="ECO:0000250" key="2">
    <source>
        <dbReference type="UniProtKB" id="B7QK46"/>
    </source>
</evidence>
<evidence type="ECO:0000250" key="3">
    <source>
        <dbReference type="UniProtKB" id="Q16769"/>
    </source>
</evidence>
<evidence type="ECO:0000255" key="4"/>
<evidence type="ECO:0000269" key="5">
    <source>
    </source>
</evidence>
<evidence type="ECO:0000303" key="6">
    <source>
    </source>
</evidence>
<evidence type="ECO:0000305" key="7"/>